<evidence type="ECO:0000255" key="1">
    <source>
        <dbReference type="HAMAP-Rule" id="MF_00225"/>
    </source>
</evidence>
<comment type="function">
    <text evidence="1">Catalyzes the conversion of dihydroorotate to orotate with quinone as electron acceptor.</text>
</comment>
<comment type="catalytic activity">
    <reaction evidence="1">
        <text>(S)-dihydroorotate + a quinone = orotate + a quinol</text>
        <dbReference type="Rhea" id="RHEA:30187"/>
        <dbReference type="ChEBI" id="CHEBI:24646"/>
        <dbReference type="ChEBI" id="CHEBI:30839"/>
        <dbReference type="ChEBI" id="CHEBI:30864"/>
        <dbReference type="ChEBI" id="CHEBI:132124"/>
        <dbReference type="EC" id="1.3.5.2"/>
    </reaction>
</comment>
<comment type="cofactor">
    <cofactor evidence="1">
        <name>FMN</name>
        <dbReference type="ChEBI" id="CHEBI:58210"/>
    </cofactor>
    <text evidence="1">Binds 1 FMN per subunit.</text>
</comment>
<comment type="pathway">
    <text evidence="1">Pyrimidine metabolism; UMP biosynthesis via de novo pathway; orotate from (S)-dihydroorotate (quinone route): step 1/1.</text>
</comment>
<comment type="subunit">
    <text evidence="1">Monomer.</text>
</comment>
<comment type="subcellular location">
    <subcellularLocation>
        <location evidence="1">Cell membrane</location>
        <topology evidence="1">Peripheral membrane protein</topology>
    </subcellularLocation>
</comment>
<comment type="similarity">
    <text evidence="1">Belongs to the dihydroorotate dehydrogenase family. Type 2 subfamily.</text>
</comment>
<accession>B1LJR7</accession>
<name>PYRD_ECOSM</name>
<dbReference type="EC" id="1.3.5.2" evidence="1"/>
<dbReference type="EMBL" id="CP000970">
    <property type="protein sequence ID" value="ACB18437.1"/>
    <property type="molecule type" value="Genomic_DNA"/>
</dbReference>
<dbReference type="RefSeq" id="WP_001305914.1">
    <property type="nucleotide sequence ID" value="NC_010498.1"/>
</dbReference>
<dbReference type="SMR" id="B1LJR7"/>
<dbReference type="KEGG" id="ecm:EcSMS35_2174"/>
<dbReference type="HOGENOM" id="CLU_013640_2_0_6"/>
<dbReference type="UniPathway" id="UPA00070">
    <property type="reaction ID" value="UER00946"/>
</dbReference>
<dbReference type="Proteomes" id="UP000007011">
    <property type="component" value="Chromosome"/>
</dbReference>
<dbReference type="GO" id="GO:0005737">
    <property type="term" value="C:cytoplasm"/>
    <property type="evidence" value="ECO:0007669"/>
    <property type="project" value="InterPro"/>
</dbReference>
<dbReference type="GO" id="GO:0005886">
    <property type="term" value="C:plasma membrane"/>
    <property type="evidence" value="ECO:0007669"/>
    <property type="project" value="UniProtKB-SubCell"/>
</dbReference>
<dbReference type="GO" id="GO:0106430">
    <property type="term" value="F:dihydroorotate dehydrogenase (quinone) activity"/>
    <property type="evidence" value="ECO:0007669"/>
    <property type="project" value="UniProtKB-EC"/>
</dbReference>
<dbReference type="GO" id="GO:0006207">
    <property type="term" value="P:'de novo' pyrimidine nucleobase biosynthetic process"/>
    <property type="evidence" value="ECO:0007669"/>
    <property type="project" value="InterPro"/>
</dbReference>
<dbReference type="GO" id="GO:0044205">
    <property type="term" value="P:'de novo' UMP biosynthetic process"/>
    <property type="evidence" value="ECO:0007669"/>
    <property type="project" value="UniProtKB-UniRule"/>
</dbReference>
<dbReference type="CDD" id="cd04738">
    <property type="entry name" value="DHOD_2_like"/>
    <property type="match status" value="1"/>
</dbReference>
<dbReference type="FunFam" id="3.20.20.70:FF:000028">
    <property type="entry name" value="Dihydroorotate dehydrogenase (quinone)"/>
    <property type="match status" value="1"/>
</dbReference>
<dbReference type="Gene3D" id="3.20.20.70">
    <property type="entry name" value="Aldolase class I"/>
    <property type="match status" value="1"/>
</dbReference>
<dbReference type="HAMAP" id="MF_00225">
    <property type="entry name" value="DHO_dh_type2"/>
    <property type="match status" value="1"/>
</dbReference>
<dbReference type="InterPro" id="IPR013785">
    <property type="entry name" value="Aldolase_TIM"/>
</dbReference>
<dbReference type="InterPro" id="IPR050074">
    <property type="entry name" value="DHO_dehydrogenase"/>
</dbReference>
<dbReference type="InterPro" id="IPR012135">
    <property type="entry name" value="Dihydroorotate_DH_1_2"/>
</dbReference>
<dbReference type="InterPro" id="IPR005719">
    <property type="entry name" value="Dihydroorotate_DH_2"/>
</dbReference>
<dbReference type="InterPro" id="IPR005720">
    <property type="entry name" value="Dihydroorotate_DH_cat"/>
</dbReference>
<dbReference type="InterPro" id="IPR001295">
    <property type="entry name" value="Dihydroorotate_DH_CS"/>
</dbReference>
<dbReference type="NCBIfam" id="NF003644">
    <property type="entry name" value="PRK05286.1-1"/>
    <property type="match status" value="1"/>
</dbReference>
<dbReference type="NCBIfam" id="NF003645">
    <property type="entry name" value="PRK05286.1-2"/>
    <property type="match status" value="1"/>
</dbReference>
<dbReference type="NCBIfam" id="NF003646">
    <property type="entry name" value="PRK05286.1-4"/>
    <property type="match status" value="1"/>
</dbReference>
<dbReference type="NCBIfam" id="NF003652">
    <property type="entry name" value="PRK05286.2-5"/>
    <property type="match status" value="1"/>
</dbReference>
<dbReference type="NCBIfam" id="TIGR01036">
    <property type="entry name" value="pyrD_sub2"/>
    <property type="match status" value="1"/>
</dbReference>
<dbReference type="PANTHER" id="PTHR48109:SF4">
    <property type="entry name" value="DIHYDROOROTATE DEHYDROGENASE (QUINONE), MITOCHONDRIAL"/>
    <property type="match status" value="1"/>
</dbReference>
<dbReference type="PANTHER" id="PTHR48109">
    <property type="entry name" value="DIHYDROOROTATE DEHYDROGENASE (QUINONE), MITOCHONDRIAL-RELATED"/>
    <property type="match status" value="1"/>
</dbReference>
<dbReference type="Pfam" id="PF01180">
    <property type="entry name" value="DHO_dh"/>
    <property type="match status" value="1"/>
</dbReference>
<dbReference type="PIRSF" id="PIRSF000164">
    <property type="entry name" value="DHO_oxidase"/>
    <property type="match status" value="1"/>
</dbReference>
<dbReference type="SUPFAM" id="SSF51395">
    <property type="entry name" value="FMN-linked oxidoreductases"/>
    <property type="match status" value="1"/>
</dbReference>
<dbReference type="PROSITE" id="PS00911">
    <property type="entry name" value="DHODEHASE_1"/>
    <property type="match status" value="1"/>
</dbReference>
<dbReference type="PROSITE" id="PS00912">
    <property type="entry name" value="DHODEHASE_2"/>
    <property type="match status" value="1"/>
</dbReference>
<protein>
    <recommendedName>
        <fullName evidence="1">Dihydroorotate dehydrogenase (quinone)</fullName>
        <ecNumber evidence="1">1.3.5.2</ecNumber>
    </recommendedName>
    <alternativeName>
        <fullName evidence="1">DHOdehase</fullName>
        <shortName evidence="1">DHOD</shortName>
        <shortName evidence="1">DHODase</shortName>
    </alternativeName>
    <alternativeName>
        <fullName evidence="1">Dihydroorotate oxidase</fullName>
    </alternativeName>
</protein>
<keyword id="KW-1003">Cell membrane</keyword>
<keyword id="KW-0285">Flavoprotein</keyword>
<keyword id="KW-0288">FMN</keyword>
<keyword id="KW-0472">Membrane</keyword>
<keyword id="KW-0560">Oxidoreductase</keyword>
<keyword id="KW-0665">Pyrimidine biosynthesis</keyword>
<organism>
    <name type="scientific">Escherichia coli (strain SMS-3-5 / SECEC)</name>
    <dbReference type="NCBI Taxonomy" id="439855"/>
    <lineage>
        <taxon>Bacteria</taxon>
        <taxon>Pseudomonadati</taxon>
        <taxon>Pseudomonadota</taxon>
        <taxon>Gammaproteobacteria</taxon>
        <taxon>Enterobacterales</taxon>
        <taxon>Enterobacteriaceae</taxon>
        <taxon>Escherichia</taxon>
    </lineage>
</organism>
<gene>
    <name evidence="1" type="primary">pyrD</name>
    <name type="ordered locus">EcSMS35_2174</name>
</gene>
<sequence length="336" mass="36789">MYYPFVRKALFQLDPERAHEFTFQQLRRITGTPFEALVRQKVPAKPVNCMGLTFKNPLGLAAGLDKDGECIDALGAMGFGSIEIGTVTPRPQPGNDKPRLFRLVDAEGLINRMGFNNLGVDNLVENVKKAHYDGVLGINIGKNKDTPVEQGKDDYLICMEKIYAYAGYIAINISSPNTPGLRTLQYGEALDDLLTAIKNKQNDLQAMHHKYVPIAVKIAPDLSEEELIQVADSLVRHNIDGVIATNTTLDRSLVQGMKNCDQTGGLSGRPLQLKSTEIIRRLSQELNGRLPIIGVGGIDSVIAAREKIAAGASLVQIYSGFIFKGPPLIKEIVTHI</sequence>
<feature type="chain" id="PRO_1000195070" description="Dihydroorotate dehydrogenase (quinone)">
    <location>
        <begin position="1"/>
        <end position="336"/>
    </location>
</feature>
<feature type="active site" description="Nucleophile" evidence="1">
    <location>
        <position position="175"/>
    </location>
</feature>
<feature type="binding site" evidence="1">
    <location>
        <begin position="62"/>
        <end position="66"/>
    </location>
    <ligand>
        <name>FMN</name>
        <dbReference type="ChEBI" id="CHEBI:58210"/>
    </ligand>
</feature>
<feature type="binding site" evidence="1">
    <location>
        <position position="66"/>
    </location>
    <ligand>
        <name>substrate</name>
    </ligand>
</feature>
<feature type="binding site" evidence="1">
    <location>
        <position position="86"/>
    </location>
    <ligand>
        <name>FMN</name>
        <dbReference type="ChEBI" id="CHEBI:58210"/>
    </ligand>
</feature>
<feature type="binding site" evidence="1">
    <location>
        <begin position="111"/>
        <end position="115"/>
    </location>
    <ligand>
        <name>substrate</name>
    </ligand>
</feature>
<feature type="binding site" evidence="1">
    <location>
        <position position="139"/>
    </location>
    <ligand>
        <name>FMN</name>
        <dbReference type="ChEBI" id="CHEBI:58210"/>
    </ligand>
</feature>
<feature type="binding site" evidence="1">
    <location>
        <position position="172"/>
    </location>
    <ligand>
        <name>FMN</name>
        <dbReference type="ChEBI" id="CHEBI:58210"/>
    </ligand>
</feature>
<feature type="binding site" evidence="1">
    <location>
        <position position="172"/>
    </location>
    <ligand>
        <name>substrate</name>
    </ligand>
</feature>
<feature type="binding site" evidence="1">
    <location>
        <position position="177"/>
    </location>
    <ligand>
        <name>substrate</name>
    </ligand>
</feature>
<feature type="binding site" evidence="1">
    <location>
        <position position="217"/>
    </location>
    <ligand>
        <name>FMN</name>
        <dbReference type="ChEBI" id="CHEBI:58210"/>
    </ligand>
</feature>
<feature type="binding site" evidence="1">
    <location>
        <position position="245"/>
    </location>
    <ligand>
        <name>FMN</name>
        <dbReference type="ChEBI" id="CHEBI:58210"/>
    </ligand>
</feature>
<feature type="binding site" evidence="1">
    <location>
        <begin position="246"/>
        <end position="247"/>
    </location>
    <ligand>
        <name>substrate</name>
    </ligand>
</feature>
<feature type="binding site" evidence="1">
    <location>
        <position position="268"/>
    </location>
    <ligand>
        <name>FMN</name>
        <dbReference type="ChEBI" id="CHEBI:58210"/>
    </ligand>
</feature>
<feature type="binding site" evidence="1">
    <location>
        <position position="297"/>
    </location>
    <ligand>
        <name>FMN</name>
        <dbReference type="ChEBI" id="CHEBI:58210"/>
    </ligand>
</feature>
<feature type="binding site" evidence="1">
    <location>
        <begin position="318"/>
        <end position="319"/>
    </location>
    <ligand>
        <name>FMN</name>
        <dbReference type="ChEBI" id="CHEBI:58210"/>
    </ligand>
</feature>
<proteinExistence type="inferred from homology"/>
<reference key="1">
    <citation type="journal article" date="2008" name="J. Bacteriol.">
        <title>Insights into the environmental resistance gene pool from the genome sequence of the multidrug-resistant environmental isolate Escherichia coli SMS-3-5.</title>
        <authorList>
            <person name="Fricke W.F."/>
            <person name="Wright M.S."/>
            <person name="Lindell A.H."/>
            <person name="Harkins D.M."/>
            <person name="Baker-Austin C."/>
            <person name="Ravel J."/>
            <person name="Stepanauskas R."/>
        </authorList>
    </citation>
    <scope>NUCLEOTIDE SEQUENCE [LARGE SCALE GENOMIC DNA]</scope>
    <source>
        <strain>SMS-3-5 / SECEC</strain>
    </source>
</reference>